<comment type="function">
    <text evidence="1">NDH-1 shuttles electrons from NADH, via FMN and iron-sulfur (Fe-S) centers, to quinones in the respiratory chain. The immediate electron acceptor for the enzyme in this species is believed to be ubiquinone. Couples the redox reaction to proton translocation (for every two electrons transferred, four hydrogen ions are translocated across the cytoplasmic membrane), and thus conserves the redox energy in a proton gradient.</text>
</comment>
<comment type="catalytic activity">
    <reaction evidence="1">
        <text>a quinone + NADH + 5 H(+)(in) = a quinol + NAD(+) + 4 H(+)(out)</text>
        <dbReference type="Rhea" id="RHEA:57888"/>
        <dbReference type="ChEBI" id="CHEBI:15378"/>
        <dbReference type="ChEBI" id="CHEBI:24646"/>
        <dbReference type="ChEBI" id="CHEBI:57540"/>
        <dbReference type="ChEBI" id="CHEBI:57945"/>
        <dbReference type="ChEBI" id="CHEBI:132124"/>
    </reaction>
</comment>
<comment type="subunit">
    <text evidence="1">NDH-1 is composed of 14 different subunits. Subunits NuoA, H, J, K, L, M, N constitute the membrane sector of the complex.</text>
</comment>
<comment type="subcellular location">
    <subcellularLocation>
        <location evidence="1">Cell inner membrane</location>
        <topology evidence="1">Multi-pass membrane protein</topology>
    </subcellularLocation>
</comment>
<comment type="similarity">
    <text evidence="1">Belongs to the complex I subunit 3 family.</text>
</comment>
<gene>
    <name evidence="1" type="primary">nuoA</name>
    <name type="ordered locus">RPA4264</name>
</gene>
<proteinExistence type="inferred from homology"/>
<evidence type="ECO:0000255" key="1">
    <source>
        <dbReference type="HAMAP-Rule" id="MF_01394"/>
    </source>
</evidence>
<keyword id="KW-0997">Cell inner membrane</keyword>
<keyword id="KW-1003">Cell membrane</keyword>
<keyword id="KW-0472">Membrane</keyword>
<keyword id="KW-0520">NAD</keyword>
<keyword id="KW-0874">Quinone</keyword>
<keyword id="KW-1278">Translocase</keyword>
<keyword id="KW-0812">Transmembrane</keyword>
<keyword id="KW-1133">Transmembrane helix</keyword>
<keyword id="KW-0813">Transport</keyword>
<keyword id="KW-0830">Ubiquinone</keyword>
<protein>
    <recommendedName>
        <fullName evidence="1">NADH-quinone oxidoreductase subunit A</fullName>
        <ecNumber evidence="1">7.1.1.-</ecNumber>
    </recommendedName>
    <alternativeName>
        <fullName evidence="1">NADH dehydrogenase I subunit A</fullName>
    </alternativeName>
    <alternativeName>
        <fullName evidence="1">NDH-1 subunit A</fullName>
    </alternativeName>
    <alternativeName>
        <fullName evidence="1">NUO1</fullName>
    </alternativeName>
</protein>
<name>NUOA_RHOPA</name>
<dbReference type="EC" id="7.1.1.-" evidence="1"/>
<dbReference type="EMBL" id="BX572606">
    <property type="protein sequence ID" value="CAE29705.1"/>
    <property type="molecule type" value="Genomic_DNA"/>
</dbReference>
<dbReference type="RefSeq" id="WP_011159799.1">
    <property type="nucleotide sequence ID" value="NZ_CP116810.1"/>
</dbReference>
<dbReference type="SMR" id="Q6N1Y8"/>
<dbReference type="STRING" id="258594.RPA4264"/>
<dbReference type="eggNOG" id="COG0838">
    <property type="taxonomic scope" value="Bacteria"/>
</dbReference>
<dbReference type="HOGENOM" id="CLU_119549_2_1_5"/>
<dbReference type="PhylomeDB" id="Q6N1Y8"/>
<dbReference type="GO" id="GO:0030964">
    <property type="term" value="C:NADH dehydrogenase complex"/>
    <property type="evidence" value="ECO:0007669"/>
    <property type="project" value="TreeGrafter"/>
</dbReference>
<dbReference type="GO" id="GO:0005886">
    <property type="term" value="C:plasma membrane"/>
    <property type="evidence" value="ECO:0007669"/>
    <property type="project" value="UniProtKB-SubCell"/>
</dbReference>
<dbReference type="GO" id="GO:0008137">
    <property type="term" value="F:NADH dehydrogenase (ubiquinone) activity"/>
    <property type="evidence" value="ECO:0007669"/>
    <property type="project" value="InterPro"/>
</dbReference>
<dbReference type="GO" id="GO:0050136">
    <property type="term" value="F:NADH:ubiquinone reductase (non-electrogenic) activity"/>
    <property type="evidence" value="ECO:0007669"/>
    <property type="project" value="UniProtKB-UniRule"/>
</dbReference>
<dbReference type="GO" id="GO:0048038">
    <property type="term" value="F:quinone binding"/>
    <property type="evidence" value="ECO:0007669"/>
    <property type="project" value="UniProtKB-KW"/>
</dbReference>
<dbReference type="Gene3D" id="1.20.58.1610">
    <property type="entry name" value="NADH:ubiquinone/plastoquinone oxidoreductase, chain 3"/>
    <property type="match status" value="1"/>
</dbReference>
<dbReference type="HAMAP" id="MF_01394">
    <property type="entry name" value="NDH1_NuoA"/>
    <property type="match status" value="1"/>
</dbReference>
<dbReference type="InterPro" id="IPR023043">
    <property type="entry name" value="NAD(P)H_OxRDtase_bac/plastid"/>
</dbReference>
<dbReference type="InterPro" id="IPR000440">
    <property type="entry name" value="NADH_UbQ/plastoQ_OxRdtase_su3"/>
</dbReference>
<dbReference type="InterPro" id="IPR038430">
    <property type="entry name" value="NDAH_ubi_oxred_su3_sf"/>
</dbReference>
<dbReference type="PANTHER" id="PTHR11058:SF21">
    <property type="entry name" value="NADH-QUINONE OXIDOREDUCTASE SUBUNIT A"/>
    <property type="match status" value="1"/>
</dbReference>
<dbReference type="PANTHER" id="PTHR11058">
    <property type="entry name" value="NADH-UBIQUINONE OXIDOREDUCTASE CHAIN 3"/>
    <property type="match status" value="1"/>
</dbReference>
<dbReference type="Pfam" id="PF00507">
    <property type="entry name" value="Oxidored_q4"/>
    <property type="match status" value="1"/>
</dbReference>
<accession>Q6N1Y8</accession>
<reference key="1">
    <citation type="journal article" date="2004" name="Nat. Biotechnol.">
        <title>Complete genome sequence of the metabolically versatile photosynthetic bacterium Rhodopseudomonas palustris.</title>
        <authorList>
            <person name="Larimer F.W."/>
            <person name="Chain P."/>
            <person name="Hauser L."/>
            <person name="Lamerdin J.E."/>
            <person name="Malfatti S."/>
            <person name="Do L."/>
            <person name="Land M.L."/>
            <person name="Pelletier D.A."/>
            <person name="Beatty J.T."/>
            <person name="Lang A.S."/>
            <person name="Tabita F.R."/>
            <person name="Gibson J.L."/>
            <person name="Hanson T.E."/>
            <person name="Bobst C."/>
            <person name="Torres y Torres J.L."/>
            <person name="Peres C."/>
            <person name="Harrison F.H."/>
            <person name="Gibson J."/>
            <person name="Harwood C.S."/>
        </authorList>
    </citation>
    <scope>NUCLEOTIDE SEQUENCE [LARGE SCALE GENOMIC DNA]</scope>
    <source>
        <strain>ATCC BAA-98 / CGA009</strain>
    </source>
</reference>
<organism>
    <name type="scientific">Rhodopseudomonas palustris (strain ATCC BAA-98 / CGA009)</name>
    <dbReference type="NCBI Taxonomy" id="258594"/>
    <lineage>
        <taxon>Bacteria</taxon>
        <taxon>Pseudomonadati</taxon>
        <taxon>Pseudomonadota</taxon>
        <taxon>Alphaproteobacteria</taxon>
        <taxon>Hyphomicrobiales</taxon>
        <taxon>Nitrobacteraceae</taxon>
        <taxon>Rhodopseudomonas</taxon>
    </lineage>
</organism>
<feature type="chain" id="PRO_0000362755" description="NADH-quinone oxidoreductase subunit A">
    <location>
        <begin position="1"/>
        <end position="129"/>
    </location>
</feature>
<feature type="transmembrane region" description="Helical" evidence="1">
    <location>
        <begin position="14"/>
        <end position="34"/>
    </location>
</feature>
<feature type="transmembrane region" description="Helical" evidence="1">
    <location>
        <begin position="67"/>
        <end position="87"/>
    </location>
</feature>
<feature type="transmembrane region" description="Helical" evidence="1">
    <location>
        <begin position="95"/>
        <end position="115"/>
    </location>
</feature>
<sequence>MGDLTLPINSGAALAIHVALSAGIVAAIIVVAAWLREKRSGARPDVPYEGGVLPAQPQQGPLNAPYFLIAALFVIFDMEAAILFAWAVAARDAGWLGLIEAAVFIGVLLLALVYLWLDGALDWVKGKRR</sequence>